<accession>Q794C0</accession>
<reference key="1">
    <citation type="journal article" date="2001" name="Biochem. Biophys. Res. Commun.">
        <title>Cloning of a D-serine-regulated transcript dsr-1 from the rat cerebral cortex.</title>
        <authorList>
            <person name="Tsuchida H."/>
            <person name="Yamamoto N."/>
            <person name="Kajii Y."/>
            <person name="Umino A."/>
            <person name="Fukui K."/>
            <person name="Nishikawa T."/>
        </authorList>
    </citation>
    <scope>NUCLEOTIDE SEQUENCE [MRNA]</scope>
</reference>
<gene>
    <name type="primary">Atp6v0e1</name>
    <name type="synonym">Atp6v0e</name>
    <name type="synonym">Dsr1</name>
</gene>
<proteinExistence type="inferred from homology"/>
<evidence type="ECO:0000250" key="1">
    <source>
        <dbReference type="UniProtKB" id="O15342"/>
    </source>
</evidence>
<evidence type="ECO:0000250" key="2">
    <source>
        <dbReference type="UniProtKB" id="Q2KIB5"/>
    </source>
</evidence>
<evidence type="ECO:0000255" key="3"/>
<evidence type="ECO:0000305" key="4"/>
<name>VA0E1_RAT</name>
<comment type="function">
    <text evidence="1 2">Subunit of the V0 complex of vacuolar(H+)-ATPase (V-ATPase), a multisubunit enzyme composed of a peripheral complex (V1) that hydrolyzes ATP and a membrane integral complex (V0) that translocates protons (By similarity). V-ATPase is responsible for acidifying and maintaining the pH of intracellular compartments and in some cell types, is targeted to the plasma membrane, where it is responsible for acidifying the extracellular environment (By similarity).</text>
</comment>
<comment type="subunit">
    <text evidence="1">V-ATPase is a heteromultimeric enzyme made up of two complexes: the ATP-hydrolytic V1 complex and the proton translocation V0 complex (By similarity). The V1 complex consists of three catalytic AB heterodimers that form a heterohexamer, three peripheral stalks each consisting of EG heterodimers, one central rotor including subunits D and F, and the regulatory subunits C and H (By similarity). The proton translocation complex V0 consists of the proton transport subunit a, a ring of proteolipid subunits c9c'', rotary subunit d, subunits e and f, and the accessory subunits ATP6AP1/Ac45 and ATP6AP2/PRR (By similarity).</text>
</comment>
<comment type="subcellular location">
    <subcellularLocation>
        <location evidence="3">Membrane</location>
        <topology evidence="3">Multi-pass membrane protein</topology>
    </subcellularLocation>
</comment>
<comment type="similarity">
    <text evidence="4">Belongs to the V-ATPase e1/e2 subunit family.</text>
</comment>
<keyword id="KW-0325">Glycoprotein</keyword>
<keyword id="KW-0375">Hydrogen ion transport</keyword>
<keyword id="KW-0406">Ion transport</keyword>
<keyword id="KW-0472">Membrane</keyword>
<keyword id="KW-1185">Reference proteome</keyword>
<keyword id="KW-0812">Transmembrane</keyword>
<keyword id="KW-1133">Transmembrane helix</keyword>
<keyword id="KW-0813">Transport</keyword>
<protein>
    <recommendedName>
        <fullName>V-type proton ATPase subunit e 1</fullName>
        <shortName>V-ATPase subunit e 1</shortName>
    </recommendedName>
    <alternativeName>
        <fullName>D-serine-regulated transcript 1 protein</fullName>
        <shortName>DSR-1</shortName>
    </alternativeName>
    <alternativeName>
        <fullName>V-ATPase 9.2 kDa membrane accessory protein</fullName>
    </alternativeName>
    <alternativeName>
        <fullName>V-ATPase M9.2 subunit</fullName>
    </alternativeName>
    <alternativeName>
        <fullName>Vacuolar proton pump subunit e 1</fullName>
    </alternativeName>
</protein>
<dbReference type="EMBL" id="AB037248">
    <property type="protein sequence ID" value="BAB32689.1"/>
    <property type="molecule type" value="mRNA"/>
</dbReference>
<dbReference type="RefSeq" id="NP_446030.3">
    <property type="nucleotide sequence ID" value="NM_053578.3"/>
</dbReference>
<dbReference type="SMR" id="Q794C0"/>
<dbReference type="FunCoup" id="Q794C0">
    <property type="interactions" value="1392"/>
</dbReference>
<dbReference type="STRING" id="10116.ENSRNOP00000071366"/>
<dbReference type="GlyCosmos" id="Q794C0">
    <property type="glycosylation" value="1 site, No reported glycans"/>
</dbReference>
<dbReference type="GlyGen" id="Q794C0">
    <property type="glycosylation" value="1 site"/>
</dbReference>
<dbReference type="PhosphoSitePlus" id="Q794C0"/>
<dbReference type="PaxDb" id="10116-ENSRNOP00000004653"/>
<dbReference type="GeneID" id="94170"/>
<dbReference type="KEGG" id="rno:94170"/>
<dbReference type="UCSC" id="RGD:621393">
    <property type="organism name" value="rat"/>
</dbReference>
<dbReference type="AGR" id="RGD:621393"/>
<dbReference type="CTD" id="8992"/>
<dbReference type="RGD" id="621393">
    <property type="gene designation" value="Atp6v0e1"/>
</dbReference>
<dbReference type="VEuPathDB" id="HostDB:ENSRNOG00000003269"/>
<dbReference type="eggNOG" id="KOG3500">
    <property type="taxonomic scope" value="Eukaryota"/>
</dbReference>
<dbReference type="HOGENOM" id="CLU_170555_0_1_1"/>
<dbReference type="InParanoid" id="Q794C0"/>
<dbReference type="OrthoDB" id="165at9989"/>
<dbReference type="PhylomeDB" id="Q794C0"/>
<dbReference type="TreeFam" id="TF300290"/>
<dbReference type="Reactome" id="R-RNO-1222556">
    <property type="pathway name" value="ROS and RNS production in phagocytes"/>
</dbReference>
<dbReference type="Reactome" id="R-RNO-77387">
    <property type="pathway name" value="Insulin receptor recycling"/>
</dbReference>
<dbReference type="Reactome" id="R-RNO-917977">
    <property type="pathway name" value="Transferrin endocytosis and recycling"/>
</dbReference>
<dbReference type="Reactome" id="R-RNO-9639288">
    <property type="pathway name" value="Amino acids regulate mTORC1"/>
</dbReference>
<dbReference type="Reactome" id="R-RNO-983712">
    <property type="pathway name" value="Ion channel transport"/>
</dbReference>
<dbReference type="PRO" id="PR:Q794C0"/>
<dbReference type="Proteomes" id="UP000002494">
    <property type="component" value="Chromosome 10"/>
</dbReference>
<dbReference type="Bgee" id="ENSRNOG00000003269">
    <property type="expression patterns" value="Expressed in ovary and 20 other cell types or tissues"/>
</dbReference>
<dbReference type="ExpressionAtlas" id="Q794C0">
    <property type="expression patterns" value="baseline and differential"/>
</dbReference>
<dbReference type="GO" id="GO:0033176">
    <property type="term" value="C:proton-transporting V-type ATPase complex"/>
    <property type="evidence" value="ECO:0000266"/>
    <property type="project" value="RGD"/>
</dbReference>
<dbReference type="GO" id="GO:0033179">
    <property type="term" value="C:proton-transporting V-type ATPase, V0 domain"/>
    <property type="evidence" value="ECO:0007669"/>
    <property type="project" value="InterPro"/>
</dbReference>
<dbReference type="GO" id="GO:0046961">
    <property type="term" value="F:proton-transporting ATPase activity, rotational mechanism"/>
    <property type="evidence" value="ECO:0000266"/>
    <property type="project" value="RGD"/>
</dbReference>
<dbReference type="GO" id="GO:1902600">
    <property type="term" value="P:proton transmembrane transport"/>
    <property type="evidence" value="ECO:0000266"/>
    <property type="project" value="RGD"/>
</dbReference>
<dbReference type="GO" id="GO:0043200">
    <property type="term" value="P:response to amino acid"/>
    <property type="evidence" value="ECO:0000270"/>
    <property type="project" value="RGD"/>
</dbReference>
<dbReference type="GO" id="GO:0055085">
    <property type="term" value="P:transmembrane transport"/>
    <property type="evidence" value="ECO:0000318"/>
    <property type="project" value="GO_Central"/>
</dbReference>
<dbReference type="InterPro" id="IPR008389">
    <property type="entry name" value="ATPase_V0-cplx_e1/e2_su"/>
</dbReference>
<dbReference type="InterPro" id="IPR017385">
    <property type="entry name" value="ATPase_V0-cplx_e1/e2_su_met"/>
</dbReference>
<dbReference type="PANTHER" id="PTHR12263:SF5">
    <property type="entry name" value="V-TYPE PROTON ATPASE SUBUNIT E 1"/>
    <property type="match status" value="1"/>
</dbReference>
<dbReference type="PANTHER" id="PTHR12263">
    <property type="entry name" value="VACUOLAR ATP SYNTHASE SUBUNIT H"/>
    <property type="match status" value="1"/>
</dbReference>
<dbReference type="Pfam" id="PF05493">
    <property type="entry name" value="ATP_synt_H"/>
    <property type="match status" value="1"/>
</dbReference>
<dbReference type="PIRSF" id="PIRSF038097">
    <property type="entry name" value="V-ATP_synth_e1/e2"/>
    <property type="match status" value="1"/>
</dbReference>
<feature type="chain" id="PRO_0000270197" description="V-type proton ATPase subunit e 1">
    <location>
        <begin position="1"/>
        <end position="81"/>
    </location>
</feature>
<feature type="topological domain" description="Lumenal" evidence="4">
    <location>
        <begin position="1"/>
        <end position="7"/>
    </location>
</feature>
<feature type="transmembrane region" description="Helical" evidence="3">
    <location>
        <begin position="8"/>
        <end position="28"/>
    </location>
</feature>
<feature type="topological domain" description="Cytoplasmic" evidence="4">
    <location>
        <begin position="29"/>
        <end position="35"/>
    </location>
</feature>
<feature type="transmembrane region" description="Helical" evidence="3">
    <location>
        <begin position="36"/>
        <end position="56"/>
    </location>
</feature>
<feature type="topological domain" description="Lumenal" evidence="4">
    <location>
        <begin position="57"/>
        <end position="81"/>
    </location>
</feature>
<feature type="glycosylation site" description="N-linked (GlcNAc...) asparagine" evidence="3">
    <location>
        <position position="70"/>
    </location>
</feature>
<sequence length="81" mass="9340">MAYHGLTVPLIVMSVFWGFVGLLVPWFIPKGPNRGVIITMLVTCSVCCYLFWLIAILAQLNPLFGPQLKNETIWYLKYHWP</sequence>
<organism>
    <name type="scientific">Rattus norvegicus</name>
    <name type="common">Rat</name>
    <dbReference type="NCBI Taxonomy" id="10116"/>
    <lineage>
        <taxon>Eukaryota</taxon>
        <taxon>Metazoa</taxon>
        <taxon>Chordata</taxon>
        <taxon>Craniata</taxon>
        <taxon>Vertebrata</taxon>
        <taxon>Euteleostomi</taxon>
        <taxon>Mammalia</taxon>
        <taxon>Eutheria</taxon>
        <taxon>Euarchontoglires</taxon>
        <taxon>Glires</taxon>
        <taxon>Rodentia</taxon>
        <taxon>Myomorpha</taxon>
        <taxon>Muroidea</taxon>
        <taxon>Muridae</taxon>
        <taxon>Murinae</taxon>
        <taxon>Rattus</taxon>
    </lineage>
</organism>